<organism>
    <name type="scientific">Caenorhabditis elegans</name>
    <dbReference type="NCBI Taxonomy" id="6239"/>
    <lineage>
        <taxon>Eukaryota</taxon>
        <taxon>Metazoa</taxon>
        <taxon>Ecdysozoa</taxon>
        <taxon>Nematoda</taxon>
        <taxon>Chromadorea</taxon>
        <taxon>Rhabditida</taxon>
        <taxon>Rhabditina</taxon>
        <taxon>Rhabditomorpha</taxon>
        <taxon>Rhabditoidea</taxon>
        <taxon>Rhabditidae</taxon>
        <taxon>Peloderinae</taxon>
        <taxon>Caenorhabditis</taxon>
    </lineage>
</organism>
<dbReference type="EMBL" id="Z48178">
    <property type="protein sequence ID" value="CAA88203.1"/>
    <property type="molecule type" value="Genomic_DNA"/>
</dbReference>
<dbReference type="PIR" id="T18943">
    <property type="entry name" value="T18943"/>
</dbReference>
<dbReference type="RefSeq" id="NP_001021918.1">
    <property type="nucleotide sequence ID" value="NM_001026747.6"/>
</dbReference>
<dbReference type="BioGRID" id="39871">
    <property type="interactions" value="12"/>
</dbReference>
<dbReference type="DIP" id="DIP-24417N"/>
<dbReference type="FunCoup" id="Q09230">
    <property type="interactions" value="341"/>
</dbReference>
<dbReference type="IntAct" id="Q09230">
    <property type="interactions" value="10"/>
</dbReference>
<dbReference type="MINT" id="Q09230"/>
<dbReference type="STRING" id="6239.C05C10.5a.1"/>
<dbReference type="PaxDb" id="6239-C05C10.5a"/>
<dbReference type="EnsemblMetazoa" id="C05C10.5a.1">
    <property type="protein sequence ID" value="C05C10.5a.1"/>
    <property type="gene ID" value="WBGene00007332"/>
</dbReference>
<dbReference type="GeneID" id="174551"/>
<dbReference type="KEGG" id="cel:CELE_C05C10.5"/>
<dbReference type="UCSC" id="C05C10.5a">
    <property type="organism name" value="c. elegans"/>
</dbReference>
<dbReference type="AGR" id="WB:WBGene00007332"/>
<dbReference type="CTD" id="174551"/>
<dbReference type="WormBase" id="C05C10.5a">
    <property type="protein sequence ID" value="CE01469"/>
    <property type="gene ID" value="WBGene00007332"/>
</dbReference>
<dbReference type="eggNOG" id="ENOG502THGR">
    <property type="taxonomic scope" value="Eukaryota"/>
</dbReference>
<dbReference type="HOGENOM" id="CLU_1469529_0_0_1"/>
<dbReference type="InParanoid" id="Q09230"/>
<dbReference type="OMA" id="GPFDEMP"/>
<dbReference type="OrthoDB" id="5796896at2759"/>
<dbReference type="PRO" id="PR:Q09230"/>
<dbReference type="Proteomes" id="UP000001940">
    <property type="component" value="Chromosome II"/>
</dbReference>
<dbReference type="Bgee" id="WBGene00007332">
    <property type="expression patterns" value="Expressed in embryo and 4 other cell types or tissues"/>
</dbReference>
<dbReference type="ExpressionAtlas" id="Q09230">
    <property type="expression patterns" value="baseline and differential"/>
</dbReference>
<proteinExistence type="evidence at protein level"/>
<evidence type="ECO:0000256" key="1">
    <source>
        <dbReference type="SAM" id="MobiDB-lite"/>
    </source>
</evidence>
<protein>
    <recommendedName>
        <fullName>Uncharacterized protein C05C10.5</fullName>
    </recommendedName>
</protein>
<keyword id="KW-1185">Reference proteome</keyword>
<sequence>MEHFHGNRWDQLRAVEADILCPPPADPFQIFPSGWTRASELSEKGWRELLDRRRSQSPPPREPSPDVRRAIRRTPPPRVNRVAPIRLPERRPLRQLNANDARRPAQDAANRINQENMRAGNIDNGQPRRRALSPTQLPGVRAIPKDFNRFFRGLLTPGEFFAKSQTRYLGPFDEMPTEDTLPAADEYIILQRMGRLPDSGKSIFRQVGNLST</sequence>
<feature type="chain" id="PRO_0000065144" description="Uncharacterized protein C05C10.5">
    <location>
        <begin position="1"/>
        <end position="212"/>
    </location>
</feature>
<feature type="region of interest" description="Disordered" evidence="1">
    <location>
        <begin position="47"/>
        <end position="129"/>
    </location>
</feature>
<accession>Q09230</accession>
<name>YQ15_CAEEL</name>
<gene>
    <name type="ORF">C05C10.5</name>
</gene>
<comment type="interaction">
    <interactant intactId="EBI-314244">
        <id>Q09230</id>
    </interactant>
    <interactant intactId="EBI-320790">
        <id>Q94420</id>
        <label>mel-26</label>
    </interactant>
    <organismsDiffer>false</organismsDiffer>
    <experiments>4</experiments>
</comment>
<reference key="1">
    <citation type="journal article" date="1998" name="Science">
        <title>Genome sequence of the nematode C. elegans: a platform for investigating biology.</title>
        <authorList>
            <consortium name="The C. elegans sequencing consortium"/>
        </authorList>
    </citation>
    <scope>NUCLEOTIDE SEQUENCE [LARGE SCALE GENOMIC DNA]</scope>
    <source>
        <strain>Bristol N2</strain>
    </source>
</reference>